<protein>
    <recommendedName>
        <fullName evidence="4">Large ribosomal subunit protein bL20</fullName>
    </recommendedName>
    <alternativeName>
        <fullName>50S ribosomal protein L20</fullName>
    </alternativeName>
</protein>
<reference key="1">
    <citation type="submission" date="2004-11" db="EMBL/GenBank/DDBJ databases">
        <title>Complete genome sequence of Thermus thermophilus HB8.</title>
        <authorList>
            <person name="Masui R."/>
            <person name="Kurokawa K."/>
            <person name="Nakagawa N."/>
            <person name="Tokunaga F."/>
            <person name="Koyama Y."/>
            <person name="Shibata T."/>
            <person name="Oshima T."/>
            <person name="Yokoyama S."/>
            <person name="Yasunaga T."/>
            <person name="Kuramitsu S."/>
        </authorList>
    </citation>
    <scope>NUCLEOTIDE SEQUENCE [LARGE SCALE GENOMIC DNA]</scope>
    <source>
        <strain>ATCC 27634 / DSM 579 / HB8</strain>
    </source>
</reference>
<reference key="2">
    <citation type="journal article" date="2000" name="Biol. Chem.">
        <title>Identification of the 50S ribosomal proteins from the eubacterium Thermus thermophilus.</title>
        <authorList>
            <person name="Katsani K.R."/>
            <person name="Tsiboli P."/>
            <person name="Anagnostopoulos K."/>
            <person name="Urlaub H."/>
            <person name="Choli-Papadopoulou T."/>
        </authorList>
    </citation>
    <scope>PROTEIN SEQUENCE OF 2-29</scope>
    <source>
        <strain>ATCC 27634 / DSM 579 / HB8</strain>
    </source>
</reference>
<reference key="3">
    <citation type="journal article" date="2005" name="Proteomics">
        <title>Extending ribosomal protein identifications to unsequenced bacterial strains using matrix-assisted laser desorption/ionization mass spectrometry.</title>
        <authorList>
            <person name="Suh M.-J."/>
            <person name="Hamburg D.M."/>
            <person name="Gregory S.T."/>
            <person name="Dahlberg A.E."/>
            <person name="Limbach P.A."/>
        </authorList>
    </citation>
    <scope>MASS SPECTROMETRY</scope>
    <source>
        <strain>ATCC 27634 / DSM 579 / HB8</strain>
    </source>
</reference>
<reference key="4">
    <citation type="journal article" date="2008" name="Science">
        <title>Insights into translational termination from the structure of RF2 bound to the ribosome.</title>
        <authorList>
            <person name="Weixlbaumer A."/>
            <person name="Jin H."/>
            <person name="Neubauer C."/>
            <person name="Voorhees R.M."/>
            <person name="Petry S."/>
            <person name="Kelley A.C."/>
            <person name="Ramakrishnan V."/>
        </authorList>
    </citation>
    <scope>X-RAY CRYSTALLOGRAPHY (3.45 ANGSTROMS) OF 70S RIBOSOME IN COMPLEX WITH RF2</scope>
    <scope>SUBUNIT</scope>
</reference>
<reference key="5">
    <citation type="journal article" date="2010" name="Proc. Natl. Acad. Sci. U.S.A.">
        <title>Structure of the 70S ribosome bound to release factor 2 and a substrate analog provides insights into catalysis of peptide release.</title>
        <authorList>
            <person name="Jin H."/>
            <person name="Kelley A.C."/>
            <person name="Loakes D."/>
            <person name="Ramakrishnan V."/>
        </authorList>
    </citation>
    <scope>X-RAY CRYSTALLOGRAPHY (3.10 ANGSTROMS) OF 70S RIBOSOME IN COMPLEX WITH RF2</scope>
    <scope>SUBUNIT</scope>
</reference>
<organism>
    <name type="scientific">Thermus thermophilus (strain ATCC 27634 / DSM 579 / HB8)</name>
    <dbReference type="NCBI Taxonomy" id="300852"/>
    <lineage>
        <taxon>Bacteria</taxon>
        <taxon>Thermotogati</taxon>
        <taxon>Deinococcota</taxon>
        <taxon>Deinococci</taxon>
        <taxon>Thermales</taxon>
        <taxon>Thermaceae</taxon>
        <taxon>Thermus</taxon>
    </lineage>
</organism>
<gene>
    <name type="primary">rplT</name>
    <name type="ordered locus">TTHA0553</name>
</gene>
<feature type="initiator methionine" description="Removed" evidence="2">
    <location>
        <position position="1"/>
    </location>
</feature>
<feature type="chain" id="PRO_0000177250" description="Large ribosomal subunit protein bL20">
    <location>
        <begin position="2"/>
        <end position="118"/>
    </location>
</feature>
<feature type="sequence conflict" description="In Ref. 2; AA sequence." evidence="4" ref="2">
    <original>W</original>
    <variation>WV</variation>
    <location>
        <position position="25"/>
    </location>
</feature>
<feature type="helix" evidence="5">
    <location>
        <begin position="9"/>
        <end position="20"/>
    </location>
</feature>
<feature type="turn" evidence="5">
    <location>
        <begin position="21"/>
        <end position="23"/>
    </location>
</feature>
<feature type="helix" evidence="5">
    <location>
        <begin position="27"/>
        <end position="30"/>
    </location>
</feature>
<feature type="helix" evidence="5">
    <location>
        <begin position="34"/>
        <end position="70"/>
    </location>
</feature>
<feature type="helix" evidence="5">
    <location>
        <begin position="76"/>
        <end position="85"/>
    </location>
</feature>
<feature type="helix" evidence="5">
    <location>
        <begin position="93"/>
        <end position="95"/>
    </location>
</feature>
<feature type="turn" evidence="5">
    <location>
        <begin position="96"/>
        <end position="100"/>
    </location>
</feature>
<feature type="helix" evidence="5">
    <location>
        <begin position="103"/>
        <end position="115"/>
    </location>
</feature>
<evidence type="ECO:0000250" key="1"/>
<evidence type="ECO:0000269" key="2">
    <source>
    </source>
</evidence>
<evidence type="ECO:0000269" key="3">
    <source>
    </source>
</evidence>
<evidence type="ECO:0000305" key="4"/>
<evidence type="ECO:0007829" key="5">
    <source>
        <dbReference type="PDB" id="4WT8"/>
    </source>
</evidence>
<comment type="function">
    <text evidence="1">Binds directly to 23S ribosomal RNA and is necessary for the in vitro assembly process of the 50S ribosomal subunit. It is not involved in the protein synthesizing functions of that subunit (By similarity).</text>
</comment>
<comment type="mass spectrometry"/>
<comment type="similarity">
    <text evidence="4">Belongs to the bacterial ribosomal protein bL20 family.</text>
</comment>
<proteinExistence type="evidence at protein level"/>
<sequence>MPRAKTGVVRRRKHKKILKLAKGYWGLRSKSFRKARETLFAAGNYAYAHRKRRKRDFRRLWIVRINAACRQHGLNYSTFIHGLKKAGIEVDRKNLADLAVREPQVFAELVERAKAAQG</sequence>
<dbReference type="EMBL" id="AP008226">
    <property type="protein sequence ID" value="BAD70376.1"/>
    <property type="molecule type" value="Genomic_DNA"/>
</dbReference>
<dbReference type="RefSeq" id="WP_011172639.1">
    <property type="nucleotide sequence ID" value="NC_006461.1"/>
</dbReference>
<dbReference type="RefSeq" id="YP_143819.1">
    <property type="nucleotide sequence ID" value="NC_006461.1"/>
</dbReference>
<dbReference type="PDB" id="1VVJ">
    <property type="method" value="X-ray"/>
    <property type="resolution" value="3.44 A"/>
    <property type="chains" value="RU/YU=1-118"/>
</dbReference>
<dbReference type="PDB" id="1VY4">
    <property type="method" value="X-ray"/>
    <property type="resolution" value="2.60 A"/>
    <property type="chains" value="BU/DU=1-118"/>
</dbReference>
<dbReference type="PDB" id="1VY5">
    <property type="method" value="X-ray"/>
    <property type="resolution" value="2.55 A"/>
    <property type="chains" value="BU/DU=1-118"/>
</dbReference>
<dbReference type="PDB" id="1VY6">
    <property type="method" value="X-ray"/>
    <property type="resolution" value="2.90 A"/>
    <property type="chains" value="BU/DU=1-118"/>
</dbReference>
<dbReference type="PDB" id="1VY7">
    <property type="method" value="X-ray"/>
    <property type="resolution" value="2.80 A"/>
    <property type="chains" value="BU/DU=1-118"/>
</dbReference>
<dbReference type="PDB" id="4L47">
    <property type="method" value="X-ray"/>
    <property type="resolution" value="3.22 A"/>
    <property type="chains" value="RU/YU=1-118"/>
</dbReference>
<dbReference type="PDB" id="4L71">
    <property type="method" value="X-ray"/>
    <property type="resolution" value="3.90 A"/>
    <property type="chains" value="RU/YU=1-118"/>
</dbReference>
<dbReference type="PDB" id="4LEL">
    <property type="method" value="X-ray"/>
    <property type="resolution" value="3.90 A"/>
    <property type="chains" value="RU/YU=1-118"/>
</dbReference>
<dbReference type="PDB" id="4LFZ">
    <property type="method" value="X-ray"/>
    <property type="resolution" value="3.92 A"/>
    <property type="chains" value="RU/YU=1-118"/>
</dbReference>
<dbReference type="PDB" id="4LNT">
    <property type="method" value="X-ray"/>
    <property type="resolution" value="2.94 A"/>
    <property type="chains" value="RU/YU=1-118"/>
</dbReference>
<dbReference type="PDB" id="4LSK">
    <property type="method" value="X-ray"/>
    <property type="resolution" value="3.48 A"/>
    <property type="chains" value="RU/YU=1-118"/>
</dbReference>
<dbReference type="PDB" id="4LT8">
    <property type="method" value="X-ray"/>
    <property type="resolution" value="3.14 A"/>
    <property type="chains" value="RU/YU=1-118"/>
</dbReference>
<dbReference type="PDB" id="4P6F">
    <property type="method" value="X-ray"/>
    <property type="resolution" value="3.60 A"/>
    <property type="chains" value="RU/YU=1-118"/>
</dbReference>
<dbReference type="PDB" id="4P70">
    <property type="method" value="X-ray"/>
    <property type="resolution" value="3.68 A"/>
    <property type="chains" value="RU/YU=1-118"/>
</dbReference>
<dbReference type="PDB" id="4TUA">
    <property type="method" value="X-ray"/>
    <property type="resolution" value="3.60 A"/>
    <property type="chains" value="RU/YU=1-118"/>
</dbReference>
<dbReference type="PDB" id="4TUB">
    <property type="method" value="X-ray"/>
    <property type="resolution" value="3.60 A"/>
    <property type="chains" value="RU/YU=1-118"/>
</dbReference>
<dbReference type="PDB" id="4TUC">
    <property type="method" value="X-ray"/>
    <property type="resolution" value="3.60 A"/>
    <property type="chains" value="RU/YU=1-118"/>
</dbReference>
<dbReference type="PDB" id="4TUD">
    <property type="method" value="X-ray"/>
    <property type="resolution" value="3.60 A"/>
    <property type="chains" value="RU/YU=1-118"/>
</dbReference>
<dbReference type="PDB" id="4TUE">
    <property type="method" value="X-ray"/>
    <property type="resolution" value="3.50 A"/>
    <property type="chains" value="RU/YU=1-118"/>
</dbReference>
<dbReference type="PDB" id="4V4P">
    <property type="method" value="X-ray"/>
    <property type="resolution" value="5.50 A"/>
    <property type="chains" value="1=1-116"/>
</dbReference>
<dbReference type="PDB" id="4V4X">
    <property type="method" value="X-ray"/>
    <property type="resolution" value="5.00 A"/>
    <property type="chains" value="BT=1-118"/>
</dbReference>
<dbReference type="PDB" id="4V4Y">
    <property type="method" value="X-ray"/>
    <property type="resolution" value="5.50 A"/>
    <property type="chains" value="BT=1-118"/>
</dbReference>
<dbReference type="PDB" id="4V4Z">
    <property type="method" value="X-ray"/>
    <property type="resolution" value="4.51 A"/>
    <property type="chains" value="BT=1-118"/>
</dbReference>
<dbReference type="PDB" id="4V51">
    <property type="method" value="X-ray"/>
    <property type="resolution" value="2.80 A"/>
    <property type="chains" value="BU/DU=2-118"/>
</dbReference>
<dbReference type="PDB" id="4V5A">
    <property type="method" value="X-ray"/>
    <property type="resolution" value="3.50 A"/>
    <property type="chains" value="BU/DU=2-118"/>
</dbReference>
<dbReference type="PDB" id="4V5C">
    <property type="method" value="X-ray"/>
    <property type="resolution" value="3.30 A"/>
    <property type="chains" value="BU/DU=1-118"/>
</dbReference>
<dbReference type="PDB" id="4V5D">
    <property type="method" value="X-ray"/>
    <property type="resolution" value="3.50 A"/>
    <property type="chains" value="BU/DU=1-118"/>
</dbReference>
<dbReference type="PDB" id="4V5E">
    <property type="method" value="X-ray"/>
    <property type="resolution" value="3.45 A"/>
    <property type="chains" value="BU/DU=1-118"/>
</dbReference>
<dbReference type="PDB" id="4V5F">
    <property type="method" value="X-ray"/>
    <property type="resolution" value="3.60 A"/>
    <property type="chains" value="BU/DU=1-118"/>
</dbReference>
<dbReference type="PDB" id="4V5G">
    <property type="method" value="X-ray"/>
    <property type="resolution" value="3.60 A"/>
    <property type="chains" value="BU/DU=1-118"/>
</dbReference>
<dbReference type="PDB" id="4V5J">
    <property type="method" value="X-ray"/>
    <property type="resolution" value="3.10 A"/>
    <property type="chains" value="BU/DU=1-118"/>
</dbReference>
<dbReference type="PDB" id="4V5K">
    <property type="method" value="X-ray"/>
    <property type="resolution" value="3.20 A"/>
    <property type="chains" value="BU/DU=1-118"/>
</dbReference>
<dbReference type="PDB" id="4V5L">
    <property type="method" value="X-ray"/>
    <property type="resolution" value="3.10 A"/>
    <property type="chains" value="BU=1-118"/>
</dbReference>
<dbReference type="PDB" id="4V5M">
    <property type="method" value="EM"/>
    <property type="resolution" value="7.80 A"/>
    <property type="chains" value="BU=1-118"/>
</dbReference>
<dbReference type="PDB" id="4V5N">
    <property type="method" value="EM"/>
    <property type="resolution" value="7.60 A"/>
    <property type="chains" value="BU=1-118"/>
</dbReference>
<dbReference type="PDB" id="4V5P">
    <property type="method" value="X-ray"/>
    <property type="resolution" value="3.10 A"/>
    <property type="chains" value="BU/DU=1-118"/>
</dbReference>
<dbReference type="PDB" id="4V5Q">
    <property type="method" value="X-ray"/>
    <property type="resolution" value="3.10 A"/>
    <property type="chains" value="BU/DU=1-118"/>
</dbReference>
<dbReference type="PDB" id="4V5R">
    <property type="method" value="X-ray"/>
    <property type="resolution" value="3.10 A"/>
    <property type="chains" value="BU/DU=1-118"/>
</dbReference>
<dbReference type="PDB" id="4V5S">
    <property type="method" value="X-ray"/>
    <property type="resolution" value="3.10 A"/>
    <property type="chains" value="BU/DU=1-118"/>
</dbReference>
<dbReference type="PDB" id="4V68">
    <property type="method" value="EM"/>
    <property type="resolution" value="6.40 A"/>
    <property type="chains" value="BU=2-118"/>
</dbReference>
<dbReference type="PDB" id="4V6A">
    <property type="method" value="X-ray"/>
    <property type="resolution" value="3.10 A"/>
    <property type="chains" value="BU/DU=1-118"/>
</dbReference>
<dbReference type="PDB" id="4V6F">
    <property type="method" value="X-ray"/>
    <property type="resolution" value="3.10 A"/>
    <property type="chains" value="A1/D1=1-118"/>
</dbReference>
<dbReference type="PDB" id="4V6G">
    <property type="method" value="X-ray"/>
    <property type="resolution" value="3.50 A"/>
    <property type="chains" value="B1/D1=1-118"/>
</dbReference>
<dbReference type="PDB" id="4V7J">
    <property type="method" value="X-ray"/>
    <property type="resolution" value="3.30 A"/>
    <property type="chains" value="AU/BU=1-118"/>
</dbReference>
<dbReference type="PDB" id="4V7K">
    <property type="method" value="X-ray"/>
    <property type="resolution" value="3.60 A"/>
    <property type="chains" value="AU/BU=1-118"/>
</dbReference>
<dbReference type="PDB" id="4V7L">
    <property type="method" value="X-ray"/>
    <property type="resolution" value="3.00 A"/>
    <property type="chains" value="BU/DU=1-118"/>
</dbReference>
<dbReference type="PDB" id="4V7M">
    <property type="method" value="X-ray"/>
    <property type="resolution" value="3.45 A"/>
    <property type="chains" value="BU/DU=1-118"/>
</dbReference>
<dbReference type="PDB" id="4V7W">
    <property type="method" value="X-ray"/>
    <property type="resolution" value="3.00 A"/>
    <property type="chains" value="BU/DU=1-118"/>
</dbReference>
<dbReference type="PDB" id="4V7X">
    <property type="method" value="X-ray"/>
    <property type="resolution" value="3.00 A"/>
    <property type="chains" value="BU/DU=1-118"/>
</dbReference>
<dbReference type="PDB" id="4V7Y">
    <property type="method" value="X-ray"/>
    <property type="resolution" value="3.00 A"/>
    <property type="chains" value="BU/DU=1-118"/>
</dbReference>
<dbReference type="PDB" id="4V7Z">
    <property type="method" value="X-ray"/>
    <property type="resolution" value="3.10 A"/>
    <property type="chains" value="BU/DU=1-118"/>
</dbReference>
<dbReference type="PDB" id="4V87">
    <property type="method" value="X-ray"/>
    <property type="resolution" value="3.10 A"/>
    <property type="chains" value="A1/D1=2-118"/>
</dbReference>
<dbReference type="PDB" id="4V8A">
    <property type="method" value="X-ray"/>
    <property type="resolution" value="3.20 A"/>
    <property type="chains" value="AU/BU=1-118"/>
</dbReference>
<dbReference type="PDB" id="4V8B">
    <property type="method" value="X-ray"/>
    <property type="resolution" value="3.00 A"/>
    <property type="chains" value="B1/D1=1-118"/>
</dbReference>
<dbReference type="PDB" id="4V8C">
    <property type="method" value="X-ray"/>
    <property type="resolution" value="3.30 A"/>
    <property type="chains" value="A1/B1=1-118"/>
</dbReference>
<dbReference type="PDB" id="4V8D">
    <property type="method" value="X-ray"/>
    <property type="resolution" value="3.00 A"/>
    <property type="chains" value="B1/D1=1-118"/>
</dbReference>
<dbReference type="PDB" id="4V8E">
    <property type="method" value="X-ray"/>
    <property type="resolution" value="3.30 A"/>
    <property type="chains" value="A1/C1=1-118"/>
</dbReference>
<dbReference type="PDB" id="4V8F">
    <property type="method" value="X-ray"/>
    <property type="resolution" value="3.30 A"/>
    <property type="chains" value="A1/D1=1-118"/>
</dbReference>
<dbReference type="PDB" id="4V8G">
    <property type="method" value="X-ray"/>
    <property type="resolution" value="3.00 A"/>
    <property type="chains" value="BU/DU=1-118"/>
</dbReference>
<dbReference type="PDB" id="4V8H">
    <property type="method" value="X-ray"/>
    <property type="resolution" value="3.10 A"/>
    <property type="chains" value="BU/DU=1-118"/>
</dbReference>
<dbReference type="PDB" id="4V8I">
    <property type="method" value="X-ray"/>
    <property type="resolution" value="2.70 A"/>
    <property type="chains" value="BU/DU=1-118"/>
</dbReference>
<dbReference type="PDB" id="4V8J">
    <property type="method" value="X-ray"/>
    <property type="resolution" value="3.90 A"/>
    <property type="chains" value="BU/DU=1-118"/>
</dbReference>
<dbReference type="PDB" id="4V8N">
    <property type="method" value="X-ray"/>
    <property type="resolution" value="3.10 A"/>
    <property type="chains" value="BU/DU=1-118"/>
</dbReference>
<dbReference type="PDB" id="4V8O">
    <property type="method" value="X-ray"/>
    <property type="resolution" value="3.80 A"/>
    <property type="chains" value="BU=1-118"/>
</dbReference>
<dbReference type="PDB" id="4V8Q">
    <property type="method" value="X-ray"/>
    <property type="resolution" value="3.10 A"/>
    <property type="chains" value="AU=1-118"/>
</dbReference>
<dbReference type="PDB" id="4V8U">
    <property type="method" value="X-ray"/>
    <property type="resolution" value="3.70 A"/>
    <property type="chains" value="BU/DU=1-118"/>
</dbReference>
<dbReference type="PDB" id="4V8X">
    <property type="method" value="X-ray"/>
    <property type="resolution" value="3.35 A"/>
    <property type="chains" value="BU/DU=1-118"/>
</dbReference>
<dbReference type="PDB" id="4V90">
    <property type="method" value="X-ray"/>
    <property type="resolution" value="2.95 A"/>
    <property type="chains" value="BU=2-118"/>
</dbReference>
<dbReference type="PDB" id="4V95">
    <property type="method" value="X-ray"/>
    <property type="resolution" value="3.20 A"/>
    <property type="chains" value="BU/DU=1-118"/>
</dbReference>
<dbReference type="PDB" id="4V97">
    <property type="method" value="X-ray"/>
    <property type="resolution" value="3.52 A"/>
    <property type="chains" value="BU/DU=1-118"/>
</dbReference>
<dbReference type="PDB" id="4V9A">
    <property type="method" value="X-ray"/>
    <property type="resolution" value="3.30 A"/>
    <property type="chains" value="B1/D1=1-118"/>
</dbReference>
<dbReference type="PDB" id="4V9B">
    <property type="method" value="X-ray"/>
    <property type="resolution" value="3.10 A"/>
    <property type="chains" value="B1/D1=1-118"/>
</dbReference>
<dbReference type="PDB" id="4V9H">
    <property type="method" value="X-ray"/>
    <property type="resolution" value="2.86 A"/>
    <property type="chains" value="BU=1-118"/>
</dbReference>
<dbReference type="PDB" id="4V9I">
    <property type="method" value="X-ray"/>
    <property type="resolution" value="3.30 A"/>
    <property type="chains" value="BU/DU=2-118"/>
</dbReference>
<dbReference type="PDB" id="4V9R">
    <property type="method" value="X-ray"/>
    <property type="resolution" value="3.00 A"/>
    <property type="chains" value="BU/DU=1-118"/>
</dbReference>
<dbReference type="PDB" id="4V9S">
    <property type="method" value="X-ray"/>
    <property type="resolution" value="3.10 A"/>
    <property type="chains" value="BU/DU=1-118"/>
</dbReference>
<dbReference type="PDB" id="4W2E">
    <property type="method" value="X-ray"/>
    <property type="resolution" value="2.90 A"/>
    <property type="chains" value="U=1-118"/>
</dbReference>
<dbReference type="PDB" id="4W2F">
    <property type="method" value="X-ray"/>
    <property type="resolution" value="2.40 A"/>
    <property type="chains" value="BU/DU=1-118"/>
</dbReference>
<dbReference type="PDB" id="4W2G">
    <property type="method" value="X-ray"/>
    <property type="resolution" value="2.55 A"/>
    <property type="chains" value="BU/DU=1-118"/>
</dbReference>
<dbReference type="PDB" id="4W2H">
    <property type="method" value="X-ray"/>
    <property type="resolution" value="2.70 A"/>
    <property type="chains" value="BU/DU=1-118"/>
</dbReference>
<dbReference type="PDB" id="4W2I">
    <property type="method" value="X-ray"/>
    <property type="resolution" value="2.70 A"/>
    <property type="chains" value="BU/DU=1-118"/>
</dbReference>
<dbReference type="PDB" id="4W4G">
    <property type="method" value="X-ray"/>
    <property type="resolution" value="3.30 A"/>
    <property type="chains" value="RU/YU=1-118"/>
</dbReference>
<dbReference type="PDB" id="4WPO">
    <property type="method" value="X-ray"/>
    <property type="resolution" value="2.80 A"/>
    <property type="chains" value="AU/CU=1-118"/>
</dbReference>
<dbReference type="PDB" id="4WQ1">
    <property type="method" value="X-ray"/>
    <property type="resolution" value="3.10 A"/>
    <property type="chains" value="85/C8=2-118"/>
</dbReference>
<dbReference type="PDB" id="4WQF">
    <property type="method" value="X-ray"/>
    <property type="resolution" value="2.80 A"/>
    <property type="chains" value="AU/CU=1-118"/>
</dbReference>
<dbReference type="PDB" id="4WQR">
    <property type="method" value="X-ray"/>
    <property type="resolution" value="3.15 A"/>
    <property type="chains" value="85/C8=1-118"/>
</dbReference>
<dbReference type="PDB" id="4WQU">
    <property type="method" value="X-ray"/>
    <property type="resolution" value="2.80 A"/>
    <property type="chains" value="AU/CU=1-118"/>
</dbReference>
<dbReference type="PDB" id="4WQY">
    <property type="method" value="X-ray"/>
    <property type="resolution" value="2.80 A"/>
    <property type="chains" value="AU/CU=1-118"/>
</dbReference>
<dbReference type="PDB" id="4WR6">
    <property type="method" value="X-ray"/>
    <property type="resolution" value="3.05 A"/>
    <property type="chains" value="85/C8=1-118"/>
</dbReference>
<dbReference type="PDB" id="4WRA">
    <property type="method" value="X-ray"/>
    <property type="resolution" value="3.05 A"/>
    <property type="chains" value="85/C8=1-118"/>
</dbReference>
<dbReference type="PDB" id="4WRO">
    <property type="method" value="X-ray"/>
    <property type="resolution" value="3.05 A"/>
    <property type="chains" value="C8=1-118"/>
</dbReference>
<dbReference type="PDB" id="4WSD">
    <property type="method" value="X-ray"/>
    <property type="resolution" value="2.95 A"/>
    <property type="chains" value="85/C8=1-118"/>
</dbReference>
<dbReference type="PDB" id="4WSM">
    <property type="method" value="X-ray"/>
    <property type="resolution" value="3.30 A"/>
    <property type="chains" value="85/C8=1-118"/>
</dbReference>
<dbReference type="PDB" id="4WT1">
    <property type="method" value="X-ray"/>
    <property type="resolution" value="3.05 A"/>
    <property type="chains" value="85/C8=1-118"/>
</dbReference>
<dbReference type="PDB" id="4WT8">
    <property type="method" value="X-ray"/>
    <property type="resolution" value="3.40 A"/>
    <property type="chains" value="CT/DT=2-118"/>
</dbReference>
<dbReference type="PDB" id="4WU1">
    <property type="method" value="X-ray"/>
    <property type="resolution" value="3.20 A"/>
    <property type="chains" value="85/C8=1-118"/>
</dbReference>
<dbReference type="PDB" id="4WZD">
    <property type="method" value="X-ray"/>
    <property type="resolution" value="3.10 A"/>
    <property type="chains" value="85/C8=1-118"/>
</dbReference>
<dbReference type="PDB" id="4WZO">
    <property type="method" value="X-ray"/>
    <property type="resolution" value="3.30 A"/>
    <property type="chains" value="85/C8=1-118"/>
</dbReference>
<dbReference type="PDB" id="4Y4O">
    <property type="method" value="X-ray"/>
    <property type="resolution" value="2.30 A"/>
    <property type="chains" value="1U/2U=1-118"/>
</dbReference>
<dbReference type="PDB" id="4Y4P">
    <property type="method" value="X-ray"/>
    <property type="resolution" value="2.50 A"/>
    <property type="chains" value="1U/2U=1-118"/>
</dbReference>
<dbReference type="PDB" id="4YPB">
    <property type="method" value="X-ray"/>
    <property type="resolution" value="3.40 A"/>
    <property type="chains" value="RU/YU=1-118"/>
</dbReference>
<dbReference type="PDB" id="4YZV">
    <property type="method" value="X-ray"/>
    <property type="resolution" value="3.10 A"/>
    <property type="chains" value="RU/YU=1-118"/>
</dbReference>
<dbReference type="PDB" id="4Z3S">
    <property type="method" value="X-ray"/>
    <property type="resolution" value="2.65 A"/>
    <property type="chains" value="1U/2U=1-118"/>
</dbReference>
<dbReference type="PDB" id="4Z8C">
    <property type="method" value="X-ray"/>
    <property type="resolution" value="2.90 A"/>
    <property type="chains" value="1U/2U=1-118"/>
</dbReference>
<dbReference type="PDB" id="4ZER">
    <property type="method" value="X-ray"/>
    <property type="resolution" value="3.10 A"/>
    <property type="chains" value="1U/2U=2-117"/>
</dbReference>
<dbReference type="PDB" id="4ZSN">
    <property type="method" value="X-ray"/>
    <property type="resolution" value="3.60 A"/>
    <property type="chains" value="RU/YU=1-118"/>
</dbReference>
<dbReference type="PDB" id="5A9Z">
    <property type="method" value="EM"/>
    <property type="resolution" value="4.70 A"/>
    <property type="chains" value="AR=2-118"/>
</dbReference>
<dbReference type="PDB" id="5AA0">
    <property type="method" value="EM"/>
    <property type="resolution" value="5.00 A"/>
    <property type="chains" value="AR=2-118"/>
</dbReference>
<dbReference type="PDB" id="5CZP">
    <property type="method" value="X-ray"/>
    <property type="resolution" value="3.30 A"/>
    <property type="chains" value="RU/YU=1-118"/>
</dbReference>
<dbReference type="PDB" id="5D8B">
    <property type="method" value="X-ray"/>
    <property type="resolution" value="3.63 A"/>
    <property type="chains" value="KB/O=1-118"/>
</dbReference>
<dbReference type="PDB" id="5DFE">
    <property type="method" value="X-ray"/>
    <property type="resolution" value="3.10 A"/>
    <property type="chains" value="RU/YU=1-118"/>
</dbReference>
<dbReference type="PDB" id="5DOX">
    <property type="method" value="X-ray"/>
    <property type="resolution" value="3.10 A"/>
    <property type="chains" value="1U/2U=1-118"/>
</dbReference>
<dbReference type="PDB" id="5DOY">
    <property type="method" value="X-ray"/>
    <property type="resolution" value="2.60 A"/>
    <property type="chains" value="1U/2U=1-118"/>
</dbReference>
<dbReference type="PDB" id="5E7K">
    <property type="method" value="X-ray"/>
    <property type="resolution" value="3.20 A"/>
    <property type="chains" value="85/C8=1-118"/>
</dbReference>
<dbReference type="PDB" id="5E81">
    <property type="method" value="X-ray"/>
    <property type="resolution" value="2.95 A"/>
    <property type="chains" value="85/C8=1-118"/>
</dbReference>
<dbReference type="PDB" id="5EL4">
    <property type="method" value="X-ray"/>
    <property type="resolution" value="3.15 A"/>
    <property type="chains" value="85/C8=1-118"/>
</dbReference>
<dbReference type="PDB" id="5EL5">
    <property type="method" value="X-ray"/>
    <property type="resolution" value="3.15 A"/>
    <property type="chains" value="85/C8=1-118"/>
</dbReference>
<dbReference type="PDB" id="5EL6">
    <property type="method" value="X-ray"/>
    <property type="resolution" value="3.10 A"/>
    <property type="chains" value="85/C8=1-118"/>
</dbReference>
<dbReference type="PDB" id="5EL7">
    <property type="method" value="X-ray"/>
    <property type="resolution" value="3.15 A"/>
    <property type="chains" value="85/C8=1-118"/>
</dbReference>
<dbReference type="PDB" id="5F8K">
    <property type="method" value="X-ray"/>
    <property type="resolution" value="2.80 A"/>
    <property type="chains" value="1U/2U=2-117"/>
</dbReference>
<dbReference type="PDB" id="5FDU">
    <property type="method" value="X-ray"/>
    <property type="resolution" value="2.90 A"/>
    <property type="chains" value="1U/2U=2-117"/>
</dbReference>
<dbReference type="PDB" id="5FDV">
    <property type="method" value="X-ray"/>
    <property type="resolution" value="2.80 A"/>
    <property type="chains" value="1U/2U=2-117"/>
</dbReference>
<dbReference type="PDB" id="5HAU">
    <property type="method" value="X-ray"/>
    <property type="resolution" value="3.00 A"/>
    <property type="chains" value="1S/2S=1-118"/>
</dbReference>
<dbReference type="PDB" id="5HCP">
    <property type="method" value="X-ray"/>
    <property type="resolution" value="2.89 A"/>
    <property type="chains" value="1U/2U=1-118"/>
</dbReference>
<dbReference type="PDB" id="5HCQ">
    <property type="method" value="X-ray"/>
    <property type="resolution" value="2.80 A"/>
    <property type="chains" value="1U/2U=1-118"/>
</dbReference>
<dbReference type="PDB" id="5HCR">
    <property type="method" value="X-ray"/>
    <property type="resolution" value="2.80 A"/>
    <property type="chains" value="1U/2U=1-118"/>
</dbReference>
<dbReference type="PDB" id="5HD1">
    <property type="method" value="X-ray"/>
    <property type="resolution" value="2.70 A"/>
    <property type="chains" value="1U/2U=1-118"/>
</dbReference>
<dbReference type="PDB" id="5IB7">
    <property type="method" value="X-ray"/>
    <property type="resolution" value="2.99 A"/>
    <property type="chains" value="85/C8=1-118"/>
</dbReference>
<dbReference type="PDB" id="5IB8">
    <property type="method" value="X-ray"/>
    <property type="resolution" value="3.13 A"/>
    <property type="chains" value="85/C8=1-118"/>
</dbReference>
<dbReference type="PDB" id="5IBB">
    <property type="method" value="X-ray"/>
    <property type="resolution" value="2.96 A"/>
    <property type="chains" value="85/C8=1-118"/>
</dbReference>
<dbReference type="PDB" id="5IMQ">
    <property type="method" value="EM"/>
    <property type="resolution" value="3.80 A"/>
    <property type="chains" value="m=1-118"/>
</dbReference>
<dbReference type="PDB" id="5IMR">
    <property type="method" value="EM"/>
    <property type="chains" value="m=1-118"/>
</dbReference>
<dbReference type="PDB" id="5J30">
    <property type="method" value="X-ray"/>
    <property type="resolution" value="3.20 A"/>
    <property type="chains" value="RU/YU=1-118"/>
</dbReference>
<dbReference type="PDB" id="5J3C">
    <property type="method" value="X-ray"/>
    <property type="resolution" value="3.04 A"/>
    <property type="chains" value="RU/YU=1-118"/>
</dbReference>
<dbReference type="PDB" id="5J4B">
    <property type="method" value="X-ray"/>
    <property type="resolution" value="2.60 A"/>
    <property type="chains" value="1U/2U=1-118"/>
</dbReference>
<dbReference type="PDB" id="5J4C">
    <property type="method" value="X-ray"/>
    <property type="resolution" value="2.80 A"/>
    <property type="chains" value="1U/2U=1-118"/>
</dbReference>
<dbReference type="PDB" id="5J8B">
    <property type="method" value="X-ray"/>
    <property type="resolution" value="2.60 A"/>
    <property type="chains" value="U=1-118"/>
</dbReference>
<dbReference type="PDB" id="5NDJ">
    <property type="method" value="X-ray"/>
    <property type="resolution" value="3.15 A"/>
    <property type="chains" value="85/C8=1-118"/>
</dbReference>
<dbReference type="PDB" id="5NDK">
    <property type="method" value="X-ray"/>
    <property type="resolution" value="2.95 A"/>
    <property type="chains" value="85/C8=1-118"/>
</dbReference>
<dbReference type="PDB" id="5OT7">
    <property type="method" value="EM"/>
    <property type="resolution" value="3.80 A"/>
    <property type="chains" value="v=2-118"/>
</dbReference>
<dbReference type="PDB" id="5UQ7">
    <property type="method" value="EM"/>
    <property type="resolution" value="3.50 A"/>
    <property type="chains" value="U=2-117"/>
</dbReference>
<dbReference type="PDB" id="5UQ8">
    <property type="method" value="EM"/>
    <property type="resolution" value="3.20 A"/>
    <property type="chains" value="U=2-117"/>
</dbReference>
<dbReference type="PDB" id="5VP2">
    <property type="method" value="X-ray"/>
    <property type="resolution" value="2.80 A"/>
    <property type="chains" value="1U/2U=1-118"/>
</dbReference>
<dbReference type="PDB" id="5VPO">
    <property type="method" value="X-ray"/>
    <property type="resolution" value="3.34 A"/>
    <property type="chains" value="RU/YU=1-118"/>
</dbReference>
<dbReference type="PDB" id="5VPP">
    <property type="method" value="X-ray"/>
    <property type="resolution" value="3.90 A"/>
    <property type="chains" value="RU/YU=1-118"/>
</dbReference>
<dbReference type="PDB" id="5W4K">
    <property type="method" value="X-ray"/>
    <property type="resolution" value="2.70 A"/>
    <property type="chains" value="1U/2U=1-118"/>
</dbReference>
<dbReference type="PDB" id="5WIS">
    <property type="method" value="X-ray"/>
    <property type="resolution" value="2.70 A"/>
    <property type="chains" value="1U/2U=1-118"/>
</dbReference>
<dbReference type="PDB" id="5WIT">
    <property type="method" value="X-ray"/>
    <property type="resolution" value="2.60 A"/>
    <property type="chains" value="1U/2U=1-118"/>
</dbReference>
<dbReference type="PDB" id="5ZLU">
    <property type="method" value="EM"/>
    <property type="resolution" value="3.60 A"/>
    <property type="chains" value="n=1-118"/>
</dbReference>
<dbReference type="PDB" id="6BUW">
    <property type="method" value="X-ray"/>
    <property type="resolution" value="3.50 A"/>
    <property type="chains" value="RU/YU=1-118"/>
</dbReference>
<dbReference type="PDB" id="6BZ6">
    <property type="method" value="X-ray"/>
    <property type="resolution" value="3.18 A"/>
    <property type="chains" value="RU/YU=1-118"/>
</dbReference>
<dbReference type="PDB" id="6BZ7">
    <property type="method" value="X-ray"/>
    <property type="resolution" value="3.68 A"/>
    <property type="chains" value="RU/YU=1-118"/>
</dbReference>
<dbReference type="PDB" id="6BZ8">
    <property type="method" value="X-ray"/>
    <property type="resolution" value="3.74 A"/>
    <property type="chains" value="RU/YU=1-118"/>
</dbReference>
<dbReference type="PDB" id="6C5L">
    <property type="method" value="X-ray"/>
    <property type="resolution" value="3.20 A"/>
    <property type="chains" value="BU/DU=1-118"/>
</dbReference>
<dbReference type="PDB" id="6CAE">
    <property type="method" value="X-ray"/>
    <property type="resolution" value="2.60 A"/>
    <property type="chains" value="1U/2U=1-118"/>
</dbReference>
<dbReference type="PDB" id="6CFJ">
    <property type="method" value="X-ray"/>
    <property type="resolution" value="2.80 A"/>
    <property type="chains" value="1U/2U=1-118"/>
</dbReference>
<dbReference type="PDB" id="6CFK">
    <property type="method" value="X-ray"/>
    <property type="resolution" value="2.70 A"/>
    <property type="chains" value="1U/2U=1-118"/>
</dbReference>
<dbReference type="PDB" id="6CFL">
    <property type="method" value="X-ray"/>
    <property type="resolution" value="2.60 A"/>
    <property type="chains" value="1U/2U=1-118"/>
</dbReference>
<dbReference type="PDB" id="6CZR">
    <property type="method" value="X-ray"/>
    <property type="resolution" value="3.14 A"/>
    <property type="chains" value="1U/2U=2-117"/>
</dbReference>
<dbReference type="PDB" id="6FKR">
    <property type="method" value="X-ray"/>
    <property type="resolution" value="3.20 A"/>
    <property type="chains" value="1U/2U=2-117"/>
</dbReference>
<dbReference type="PDB" id="6GSJ">
    <property type="method" value="X-ray"/>
    <property type="resolution" value="2.96 A"/>
    <property type="chains" value="85/C8=1-118"/>
</dbReference>
<dbReference type="PDB" id="6GSK">
    <property type="method" value="X-ray"/>
    <property type="resolution" value="3.36 A"/>
    <property type="chains" value="85/C8=1-118"/>
</dbReference>
<dbReference type="PDB" id="6GSL">
    <property type="method" value="X-ray"/>
    <property type="resolution" value="3.16 A"/>
    <property type="chains" value="85/C8=1-118"/>
</dbReference>
<dbReference type="PDB" id="6GZQ">
    <property type="method" value="EM"/>
    <property type="resolution" value="3.28 A"/>
    <property type="chains" value="P1=2-118"/>
</dbReference>
<dbReference type="PDB" id="6GZX">
    <property type="method" value="EM"/>
    <property type="resolution" value="4.57 A"/>
    <property type="chains" value="P1/P2=2-118"/>
</dbReference>
<dbReference type="PDB" id="6GZZ">
    <property type="method" value="EM"/>
    <property type="resolution" value="4.13 A"/>
    <property type="chains" value="P1/P2=2-118"/>
</dbReference>
<dbReference type="PDB" id="6N9E">
    <property type="method" value="X-ray"/>
    <property type="resolution" value="3.70 A"/>
    <property type="chains" value="1U/2U=1-118"/>
</dbReference>
<dbReference type="PDB" id="6N9F">
    <property type="method" value="X-ray"/>
    <property type="resolution" value="3.70 A"/>
    <property type="chains" value="1U/2U=1-118"/>
</dbReference>
<dbReference type="PDB" id="6ND5">
    <property type="method" value="X-ray"/>
    <property type="resolution" value="2.60 A"/>
    <property type="chains" value="1U/2U=1-118"/>
</dbReference>
<dbReference type="PDB" id="6ND6">
    <property type="method" value="X-ray"/>
    <property type="resolution" value="2.85 A"/>
    <property type="chains" value="1U/2U=1-118"/>
</dbReference>
<dbReference type="PDB" id="6NDK">
    <property type="method" value="X-ray"/>
    <property type="resolution" value="3.64 A"/>
    <property type="chains" value="RU/YU=1-118"/>
</dbReference>
<dbReference type="PDB" id="6NSH">
    <property type="method" value="X-ray"/>
    <property type="resolution" value="3.40 A"/>
    <property type="chains" value="RU/YU=1-118"/>
</dbReference>
<dbReference type="PDB" id="6NTA">
    <property type="method" value="X-ray"/>
    <property type="resolution" value="3.10 A"/>
    <property type="chains" value="RU/YU=1-118"/>
</dbReference>
<dbReference type="PDB" id="6NUO">
    <property type="method" value="X-ray"/>
    <property type="resolution" value="3.20 A"/>
    <property type="chains" value="RU/YU=1-118"/>
</dbReference>
<dbReference type="PDB" id="6NWY">
    <property type="method" value="X-ray"/>
    <property type="resolution" value="3.50 A"/>
    <property type="chains" value="RU/YU=1-118"/>
</dbReference>
<dbReference type="PDB" id="6O3M">
    <property type="method" value="X-ray"/>
    <property type="resolution" value="3.97 A"/>
    <property type="chains" value="RU/YU=1-118"/>
</dbReference>
<dbReference type="PDB" id="6O97">
    <property type="method" value="X-ray"/>
    <property type="resolution" value="2.75 A"/>
    <property type="chains" value="1U/2U=1-118"/>
</dbReference>
<dbReference type="PDB" id="6OF1">
    <property type="method" value="X-ray"/>
    <property type="resolution" value="2.80 A"/>
    <property type="chains" value="1U/2U=1-118"/>
</dbReference>
<dbReference type="PDB" id="6OF6">
    <property type="method" value="X-ray"/>
    <property type="resolution" value="3.20 A"/>
    <property type="chains" value="RU/YU=1-118"/>
</dbReference>
<dbReference type="PDB" id="6OJ2">
    <property type="method" value="X-ray"/>
    <property type="resolution" value="3.20 A"/>
    <property type="chains" value="RU/YU=1-118"/>
</dbReference>
<dbReference type="PDB" id="6OPE">
    <property type="method" value="X-ray"/>
    <property type="resolution" value="3.10 A"/>
    <property type="chains" value="RU/YU=1-118"/>
</dbReference>
<dbReference type="PDB" id="6ORD">
    <property type="method" value="X-ray"/>
    <property type="resolution" value="3.10 A"/>
    <property type="chains" value="RU/YU=1-118"/>
</dbReference>
<dbReference type="PDB" id="6OSI">
    <property type="method" value="X-ray"/>
    <property type="resolution" value="4.14 A"/>
    <property type="chains" value="RU/YU=1-118"/>
</dbReference>
<dbReference type="PDB" id="6OTR">
    <property type="method" value="X-ray"/>
    <property type="resolution" value="3.12 A"/>
    <property type="chains" value="RU/YU=1-118"/>
</dbReference>
<dbReference type="PDB" id="6OXA">
    <property type="method" value="X-ray"/>
    <property type="resolution" value="3.25 A"/>
    <property type="chains" value="RU/YU=1-118"/>
</dbReference>
<dbReference type="PDB" id="6OXI">
    <property type="method" value="X-ray"/>
    <property type="resolution" value="3.50 A"/>
    <property type="chains" value="RU/YU=1-118"/>
</dbReference>
<dbReference type="PDB" id="6Q95">
    <property type="method" value="EM"/>
    <property type="resolution" value="3.70 A"/>
    <property type="chains" value="Q=2-118"/>
</dbReference>
<dbReference type="PDB" id="6QNQ">
    <property type="method" value="X-ray"/>
    <property type="resolution" value="3.50 A"/>
    <property type="chains" value="85/C8=1-118"/>
</dbReference>
<dbReference type="PDB" id="6QNR">
    <property type="method" value="X-ray"/>
    <property type="resolution" value="3.10 A"/>
    <property type="chains" value="85/C8=1-118"/>
</dbReference>
<dbReference type="PDB" id="6UCQ">
    <property type="method" value="X-ray"/>
    <property type="resolution" value="3.50 A"/>
    <property type="chains" value="1U/2U=1-118"/>
</dbReference>
<dbReference type="PDB" id="6UO1">
    <property type="method" value="X-ray"/>
    <property type="resolution" value="2.95 A"/>
    <property type="chains" value="1U/2U=1-118"/>
</dbReference>
<dbReference type="PDB" id="6XHV">
    <property type="method" value="X-ray"/>
    <property type="resolution" value="2.40 A"/>
    <property type="chains" value="1U/2U=1-118"/>
</dbReference>
<dbReference type="PDB" id="6XHW">
    <property type="method" value="X-ray"/>
    <property type="resolution" value="2.50 A"/>
    <property type="chains" value="1U/2U=1-118"/>
</dbReference>
<dbReference type="PDB" id="6XHX">
    <property type="method" value="X-ray"/>
    <property type="resolution" value="2.55 A"/>
    <property type="chains" value="1U/2U=1-118"/>
</dbReference>
<dbReference type="PDB" id="6XHY">
    <property type="method" value="X-ray"/>
    <property type="resolution" value="2.60 A"/>
    <property type="chains" value="1U/2U=1-118"/>
</dbReference>
<dbReference type="PDB" id="6XQD">
    <property type="method" value="X-ray"/>
    <property type="resolution" value="2.80 A"/>
    <property type="chains" value="1U/2U=1-118"/>
</dbReference>
<dbReference type="PDB" id="6XQE">
    <property type="method" value="X-ray"/>
    <property type="resolution" value="3.00 A"/>
    <property type="chains" value="1U/2U=1-118"/>
</dbReference>
<dbReference type="PDB" id="7AZO">
    <property type="method" value="X-ray"/>
    <property type="resolution" value="3.30 A"/>
    <property type="chains" value="L20A/L20B=1-118"/>
</dbReference>
<dbReference type="PDB" id="7AZS">
    <property type="method" value="X-ray"/>
    <property type="resolution" value="3.10 A"/>
    <property type="chains" value="L20A/L20B=1-118"/>
</dbReference>
<dbReference type="PDB" id="7JQL">
    <property type="method" value="X-ray"/>
    <property type="resolution" value="3.00 A"/>
    <property type="chains" value="1U/2U=1-118"/>
</dbReference>
<dbReference type="PDB" id="7JQM">
    <property type="method" value="X-ray"/>
    <property type="resolution" value="3.05 A"/>
    <property type="chains" value="1U/2U=1-118"/>
</dbReference>
<dbReference type="PDB" id="7LH5">
    <property type="method" value="X-ray"/>
    <property type="resolution" value="3.27 A"/>
    <property type="chains" value="BU/DU=1-118"/>
</dbReference>
<dbReference type="PDB" id="7MD7">
    <property type="method" value="X-ray"/>
    <property type="resolution" value="2.80 A"/>
    <property type="chains" value="1U/2U=1-118"/>
</dbReference>
<dbReference type="PDB" id="7RQ8">
    <property type="method" value="X-ray"/>
    <property type="resolution" value="2.50 A"/>
    <property type="chains" value="1U/2U=1-118"/>
</dbReference>
<dbReference type="PDB" id="7RQ9">
    <property type="method" value="X-ray"/>
    <property type="resolution" value="2.60 A"/>
    <property type="chains" value="1U/2U=1-118"/>
</dbReference>
<dbReference type="PDB" id="7RQA">
    <property type="method" value="X-ray"/>
    <property type="resolution" value="2.40 A"/>
    <property type="chains" value="1U/2U=1-118"/>
</dbReference>
<dbReference type="PDB" id="7RQB">
    <property type="method" value="X-ray"/>
    <property type="resolution" value="2.45 A"/>
    <property type="chains" value="1U/2U=1-118"/>
</dbReference>
<dbReference type="PDB" id="7RQC">
    <property type="method" value="X-ray"/>
    <property type="resolution" value="2.50 A"/>
    <property type="chains" value="1U/2U=1-118"/>
</dbReference>
<dbReference type="PDB" id="7RQD">
    <property type="method" value="X-ray"/>
    <property type="resolution" value="2.50 A"/>
    <property type="chains" value="1U/2U=1-118"/>
</dbReference>
<dbReference type="PDB" id="7RQE">
    <property type="method" value="X-ray"/>
    <property type="resolution" value="2.40 A"/>
    <property type="chains" value="1U/2U=1-118"/>
</dbReference>
<dbReference type="PDB" id="7U2H">
    <property type="method" value="X-ray"/>
    <property type="resolution" value="2.55 A"/>
    <property type="chains" value="1U/2U=1-118"/>
</dbReference>
<dbReference type="PDB" id="7U2I">
    <property type="method" value="X-ray"/>
    <property type="resolution" value="2.55 A"/>
    <property type="chains" value="1U/2U=1-118"/>
</dbReference>
<dbReference type="PDB" id="7U2J">
    <property type="method" value="X-ray"/>
    <property type="resolution" value="2.55 A"/>
    <property type="chains" value="1U/2U=1-118"/>
</dbReference>
<dbReference type="PDB" id="8CVJ">
    <property type="method" value="X-ray"/>
    <property type="resolution" value="2.40 A"/>
    <property type="chains" value="1U/2U=1-118"/>
</dbReference>
<dbReference type="PDB" id="8CVK">
    <property type="method" value="X-ray"/>
    <property type="resolution" value="2.50 A"/>
    <property type="chains" value="1U/2U=1-118"/>
</dbReference>
<dbReference type="PDB" id="8CVL">
    <property type="method" value="X-ray"/>
    <property type="resolution" value="2.30 A"/>
    <property type="chains" value="1U/2U=1-118"/>
</dbReference>
<dbReference type="PDB" id="8EKB">
    <property type="method" value="X-ray"/>
    <property type="resolution" value="2.70 A"/>
    <property type="chains" value="1U/2U=1-118"/>
</dbReference>
<dbReference type="PDB" id="8EV6">
    <property type="method" value="X-ray"/>
    <property type="resolution" value="2.95 A"/>
    <property type="chains" value="1U/2U=1-118"/>
</dbReference>
<dbReference type="PDB" id="8EV7">
    <property type="method" value="X-ray"/>
    <property type="resolution" value="2.89 A"/>
    <property type="chains" value="1U/2U=1-118"/>
</dbReference>
<dbReference type="PDB" id="8FC1">
    <property type="method" value="X-ray"/>
    <property type="resolution" value="2.50 A"/>
    <property type="chains" value="1U/2U=1-118"/>
</dbReference>
<dbReference type="PDB" id="8FC2">
    <property type="method" value="X-ray"/>
    <property type="resolution" value="2.50 A"/>
    <property type="chains" value="1U/2U=1-118"/>
</dbReference>
<dbReference type="PDB" id="8FC3">
    <property type="method" value="X-ray"/>
    <property type="resolution" value="2.60 A"/>
    <property type="chains" value="1U/2U=1-118"/>
</dbReference>
<dbReference type="PDB" id="8FC4">
    <property type="method" value="X-ray"/>
    <property type="resolution" value="2.45 A"/>
    <property type="chains" value="1U/2U=1-118"/>
</dbReference>
<dbReference type="PDB" id="8FC5">
    <property type="method" value="X-ray"/>
    <property type="resolution" value="2.65 A"/>
    <property type="chains" value="1U/2U=1-118"/>
</dbReference>
<dbReference type="PDB" id="8FC6">
    <property type="method" value="X-ray"/>
    <property type="resolution" value="2.35 A"/>
    <property type="chains" value="1U/2U=1-118"/>
</dbReference>
<dbReference type="PDB" id="8FOM">
    <property type="method" value="X-ray"/>
    <property type="resolution" value="3.58 A"/>
    <property type="chains" value="RU/YU=1-118"/>
</dbReference>
<dbReference type="PDB" id="8FON">
    <property type="method" value="X-ray"/>
    <property type="resolution" value="3.64 A"/>
    <property type="chains" value="RU/YU=1-118"/>
</dbReference>
<dbReference type="PDB" id="8G29">
    <property type="method" value="X-ray"/>
    <property type="resolution" value="2.55 A"/>
    <property type="chains" value="1U/2U=1-118"/>
</dbReference>
<dbReference type="PDB" id="8G2A">
    <property type="method" value="X-ray"/>
    <property type="resolution" value="2.45 A"/>
    <property type="chains" value="1U/2U=1-118"/>
</dbReference>
<dbReference type="PDB" id="8G2B">
    <property type="method" value="X-ray"/>
    <property type="resolution" value="2.55 A"/>
    <property type="chains" value="1U/2U=1-118"/>
</dbReference>
<dbReference type="PDB" id="8G2C">
    <property type="method" value="X-ray"/>
    <property type="resolution" value="2.65 A"/>
    <property type="chains" value="1U/2U=1-118"/>
</dbReference>
<dbReference type="PDB" id="8G2D">
    <property type="method" value="X-ray"/>
    <property type="resolution" value="2.70 A"/>
    <property type="chains" value="1U/2U=1-118"/>
</dbReference>
<dbReference type="PDB" id="8T8B">
    <property type="method" value="X-ray"/>
    <property type="resolution" value="2.65 A"/>
    <property type="chains" value="1U/2U=1-118"/>
</dbReference>
<dbReference type="PDB" id="8T8C">
    <property type="method" value="X-ray"/>
    <property type="resolution" value="2.60 A"/>
    <property type="chains" value="1U/2U=1-118"/>
</dbReference>
<dbReference type="PDB" id="8UD6">
    <property type="method" value="X-ray"/>
    <property type="resolution" value="2.70 A"/>
    <property type="chains" value="1U/2U=1-118"/>
</dbReference>
<dbReference type="PDB" id="8UD7">
    <property type="method" value="X-ray"/>
    <property type="resolution" value="2.55 A"/>
    <property type="chains" value="1U/2U=1-118"/>
</dbReference>
<dbReference type="PDB" id="8UD8">
    <property type="method" value="X-ray"/>
    <property type="resolution" value="2.60 A"/>
    <property type="chains" value="1U/2U=1-118"/>
</dbReference>
<dbReference type="PDB" id="8UVR">
    <property type="method" value="X-ray"/>
    <property type="resolution" value="2.60 A"/>
    <property type="chains" value="1U/2U=1-118"/>
</dbReference>
<dbReference type="PDB" id="8UVS">
    <property type="method" value="X-ray"/>
    <property type="resolution" value="2.75 A"/>
    <property type="chains" value="1U/2U=1-118"/>
</dbReference>
<dbReference type="PDB" id="8VTU">
    <property type="method" value="X-ray"/>
    <property type="resolution" value="2.40 A"/>
    <property type="chains" value="1U/2U=1-118"/>
</dbReference>
<dbReference type="PDB" id="8VTV">
    <property type="method" value="X-ray"/>
    <property type="resolution" value="2.55 A"/>
    <property type="chains" value="1U/2U=1-118"/>
</dbReference>
<dbReference type="PDB" id="8VTW">
    <property type="method" value="X-ray"/>
    <property type="resolution" value="2.35 A"/>
    <property type="chains" value="1U/2U=1-118"/>
</dbReference>
<dbReference type="PDB" id="8VTX">
    <property type="method" value="X-ray"/>
    <property type="resolution" value="2.40 A"/>
    <property type="chains" value="1U/2U=1-118"/>
</dbReference>
<dbReference type="PDB" id="8VTY">
    <property type="method" value="X-ray"/>
    <property type="resolution" value="2.60 A"/>
    <property type="chains" value="1U/2U=1-118"/>
</dbReference>
<dbReference type="PDB" id="8WV1">
    <property type="method" value="X-ray"/>
    <property type="resolution" value="3.99 A"/>
    <property type="chains" value="P/p=1-118"/>
</dbReference>
<dbReference type="PDB" id="9B00">
    <property type="method" value="X-ray"/>
    <property type="resolution" value="2.80 A"/>
    <property type="chains" value="1U/2U=1-118"/>
</dbReference>
<dbReference type="PDB" id="9D0J">
    <property type="method" value="X-ray"/>
    <property type="resolution" value="2.50 A"/>
    <property type="chains" value="1U/2U=1-118"/>
</dbReference>
<dbReference type="PDB" id="9D7R">
    <property type="method" value="X-ray"/>
    <property type="resolution" value="2.70 A"/>
    <property type="chains" value="1U/2U=1-118"/>
</dbReference>
<dbReference type="PDB" id="9D7S">
    <property type="method" value="X-ray"/>
    <property type="resolution" value="2.85 A"/>
    <property type="chains" value="1U/2U=1-118"/>
</dbReference>
<dbReference type="PDB" id="9D7T">
    <property type="method" value="X-ray"/>
    <property type="resolution" value="2.70 A"/>
    <property type="chains" value="1U/2U=1-118"/>
</dbReference>
<dbReference type="PDB" id="9DFC">
    <property type="method" value="X-ray"/>
    <property type="resolution" value="2.50 A"/>
    <property type="chains" value="1U/2U=1-118"/>
</dbReference>
<dbReference type="PDB" id="9DFD">
    <property type="method" value="X-ray"/>
    <property type="resolution" value="2.60 A"/>
    <property type="chains" value="1U/2U=1-118"/>
</dbReference>
<dbReference type="PDB" id="9DFE">
    <property type="method" value="X-ray"/>
    <property type="resolution" value="2.60 A"/>
    <property type="chains" value="1U/2U=1-118"/>
</dbReference>
<dbReference type="PDBsum" id="1VVJ"/>
<dbReference type="PDBsum" id="1VY4"/>
<dbReference type="PDBsum" id="1VY5"/>
<dbReference type="PDBsum" id="1VY6"/>
<dbReference type="PDBsum" id="1VY7"/>
<dbReference type="PDBsum" id="4L47"/>
<dbReference type="PDBsum" id="4L71"/>
<dbReference type="PDBsum" id="4LEL"/>
<dbReference type="PDBsum" id="4LFZ"/>
<dbReference type="PDBsum" id="4LNT"/>
<dbReference type="PDBsum" id="4LSK"/>
<dbReference type="PDBsum" id="4LT8"/>
<dbReference type="PDBsum" id="4P6F"/>
<dbReference type="PDBsum" id="4P70"/>
<dbReference type="PDBsum" id="4TUA"/>
<dbReference type="PDBsum" id="4TUB"/>
<dbReference type="PDBsum" id="4TUC"/>
<dbReference type="PDBsum" id="4TUD"/>
<dbReference type="PDBsum" id="4TUE"/>
<dbReference type="PDBsum" id="4V4P"/>
<dbReference type="PDBsum" id="4V4X"/>
<dbReference type="PDBsum" id="4V4Y"/>
<dbReference type="PDBsum" id="4V4Z"/>
<dbReference type="PDBsum" id="4V51"/>
<dbReference type="PDBsum" id="4V5A"/>
<dbReference type="PDBsum" id="4V5C"/>
<dbReference type="PDBsum" id="4V5D"/>
<dbReference type="PDBsum" id="4V5E"/>
<dbReference type="PDBsum" id="4V5F"/>
<dbReference type="PDBsum" id="4V5G"/>
<dbReference type="PDBsum" id="4V5J"/>
<dbReference type="PDBsum" id="4V5K"/>
<dbReference type="PDBsum" id="4V5L"/>
<dbReference type="PDBsum" id="4V5M"/>
<dbReference type="PDBsum" id="4V5N"/>
<dbReference type="PDBsum" id="4V5P"/>
<dbReference type="PDBsum" id="4V5Q"/>
<dbReference type="PDBsum" id="4V5R"/>
<dbReference type="PDBsum" id="4V5S"/>
<dbReference type="PDBsum" id="4V68"/>
<dbReference type="PDBsum" id="4V6A"/>
<dbReference type="PDBsum" id="4V6F"/>
<dbReference type="PDBsum" id="4V6G"/>
<dbReference type="PDBsum" id="4V7J"/>
<dbReference type="PDBsum" id="4V7K"/>
<dbReference type="PDBsum" id="4V7L"/>
<dbReference type="PDBsum" id="4V7M"/>
<dbReference type="PDBsum" id="4V7W"/>
<dbReference type="PDBsum" id="4V7X"/>
<dbReference type="PDBsum" id="4V7Y"/>
<dbReference type="PDBsum" id="4V7Z"/>
<dbReference type="PDBsum" id="4V87"/>
<dbReference type="PDBsum" id="4V8A"/>
<dbReference type="PDBsum" id="4V8B"/>
<dbReference type="PDBsum" id="4V8C"/>
<dbReference type="PDBsum" id="4V8D"/>
<dbReference type="PDBsum" id="4V8E"/>
<dbReference type="PDBsum" id="4V8F"/>
<dbReference type="PDBsum" id="4V8G"/>
<dbReference type="PDBsum" id="4V8H"/>
<dbReference type="PDBsum" id="4V8I"/>
<dbReference type="PDBsum" id="4V8J"/>
<dbReference type="PDBsum" id="4V8N"/>
<dbReference type="PDBsum" id="4V8O"/>
<dbReference type="PDBsum" id="4V8Q"/>
<dbReference type="PDBsum" id="4V8U"/>
<dbReference type="PDBsum" id="4V8X"/>
<dbReference type="PDBsum" id="4V90"/>
<dbReference type="PDBsum" id="4V95"/>
<dbReference type="PDBsum" id="4V97"/>
<dbReference type="PDBsum" id="4V9A"/>
<dbReference type="PDBsum" id="4V9B"/>
<dbReference type="PDBsum" id="4V9H"/>
<dbReference type="PDBsum" id="4V9I"/>
<dbReference type="PDBsum" id="4V9R"/>
<dbReference type="PDBsum" id="4V9S"/>
<dbReference type="PDBsum" id="4W2E"/>
<dbReference type="PDBsum" id="4W2F"/>
<dbReference type="PDBsum" id="4W2G"/>
<dbReference type="PDBsum" id="4W2H"/>
<dbReference type="PDBsum" id="4W2I"/>
<dbReference type="PDBsum" id="4W4G"/>
<dbReference type="PDBsum" id="4WPO"/>
<dbReference type="PDBsum" id="4WQ1"/>
<dbReference type="PDBsum" id="4WQF"/>
<dbReference type="PDBsum" id="4WQR"/>
<dbReference type="PDBsum" id="4WQU"/>
<dbReference type="PDBsum" id="4WQY"/>
<dbReference type="PDBsum" id="4WR6"/>
<dbReference type="PDBsum" id="4WRA"/>
<dbReference type="PDBsum" id="4WRO"/>
<dbReference type="PDBsum" id="4WSD"/>
<dbReference type="PDBsum" id="4WSM"/>
<dbReference type="PDBsum" id="4WT1"/>
<dbReference type="PDBsum" id="4WT8"/>
<dbReference type="PDBsum" id="4WU1"/>
<dbReference type="PDBsum" id="4WZD"/>
<dbReference type="PDBsum" id="4WZO"/>
<dbReference type="PDBsum" id="4Y4O"/>
<dbReference type="PDBsum" id="4Y4P"/>
<dbReference type="PDBsum" id="4YPB"/>
<dbReference type="PDBsum" id="4YZV"/>
<dbReference type="PDBsum" id="4Z3S"/>
<dbReference type="PDBsum" id="4Z8C"/>
<dbReference type="PDBsum" id="4ZER"/>
<dbReference type="PDBsum" id="4ZSN"/>
<dbReference type="PDBsum" id="5A9Z"/>
<dbReference type="PDBsum" id="5AA0"/>
<dbReference type="PDBsum" id="5CZP"/>
<dbReference type="PDBsum" id="5D8B"/>
<dbReference type="PDBsum" id="5DFE"/>
<dbReference type="PDBsum" id="5DOX"/>
<dbReference type="PDBsum" id="5DOY"/>
<dbReference type="PDBsum" id="5E7K"/>
<dbReference type="PDBsum" id="5E81"/>
<dbReference type="PDBsum" id="5EL4"/>
<dbReference type="PDBsum" id="5EL5"/>
<dbReference type="PDBsum" id="5EL6"/>
<dbReference type="PDBsum" id="5EL7"/>
<dbReference type="PDBsum" id="5F8K"/>
<dbReference type="PDBsum" id="5FDU"/>
<dbReference type="PDBsum" id="5FDV"/>
<dbReference type="PDBsum" id="5HAU"/>
<dbReference type="PDBsum" id="5HCP"/>
<dbReference type="PDBsum" id="5HCQ"/>
<dbReference type="PDBsum" id="5HCR"/>
<dbReference type="PDBsum" id="5HD1"/>
<dbReference type="PDBsum" id="5IB7"/>
<dbReference type="PDBsum" id="5IB8"/>
<dbReference type="PDBsum" id="5IBB"/>
<dbReference type="PDBsum" id="5IMQ"/>
<dbReference type="PDBsum" id="5IMR"/>
<dbReference type="PDBsum" id="5J30"/>
<dbReference type="PDBsum" id="5J3C"/>
<dbReference type="PDBsum" id="5J4B"/>
<dbReference type="PDBsum" id="5J4C"/>
<dbReference type="PDBsum" id="5J8B"/>
<dbReference type="PDBsum" id="5NDJ"/>
<dbReference type="PDBsum" id="5NDK"/>
<dbReference type="PDBsum" id="5OT7"/>
<dbReference type="PDBsum" id="5UQ7"/>
<dbReference type="PDBsum" id="5UQ8"/>
<dbReference type="PDBsum" id="5VP2"/>
<dbReference type="PDBsum" id="5VPO"/>
<dbReference type="PDBsum" id="5VPP"/>
<dbReference type="PDBsum" id="5W4K"/>
<dbReference type="PDBsum" id="5WIS"/>
<dbReference type="PDBsum" id="5WIT"/>
<dbReference type="PDBsum" id="5ZLU"/>
<dbReference type="PDBsum" id="6BUW"/>
<dbReference type="PDBsum" id="6BZ6"/>
<dbReference type="PDBsum" id="6BZ7"/>
<dbReference type="PDBsum" id="6BZ8"/>
<dbReference type="PDBsum" id="6C5L"/>
<dbReference type="PDBsum" id="6CAE"/>
<dbReference type="PDBsum" id="6CFJ"/>
<dbReference type="PDBsum" id="6CFK"/>
<dbReference type="PDBsum" id="6CFL"/>
<dbReference type="PDBsum" id="6CZR"/>
<dbReference type="PDBsum" id="6FKR"/>
<dbReference type="PDBsum" id="6GSJ"/>
<dbReference type="PDBsum" id="6GSK"/>
<dbReference type="PDBsum" id="6GSL"/>
<dbReference type="PDBsum" id="6GZQ"/>
<dbReference type="PDBsum" id="6GZX"/>
<dbReference type="PDBsum" id="6GZZ"/>
<dbReference type="PDBsum" id="6N9E"/>
<dbReference type="PDBsum" id="6N9F"/>
<dbReference type="PDBsum" id="6ND5"/>
<dbReference type="PDBsum" id="6ND6"/>
<dbReference type="PDBsum" id="6NDK"/>
<dbReference type="PDBsum" id="6NSH"/>
<dbReference type="PDBsum" id="6NTA"/>
<dbReference type="PDBsum" id="6NUO"/>
<dbReference type="PDBsum" id="6NWY"/>
<dbReference type="PDBsum" id="6O3M"/>
<dbReference type="PDBsum" id="6O97"/>
<dbReference type="PDBsum" id="6OF1"/>
<dbReference type="PDBsum" id="6OF6"/>
<dbReference type="PDBsum" id="6OJ2"/>
<dbReference type="PDBsum" id="6OPE"/>
<dbReference type="PDBsum" id="6ORD"/>
<dbReference type="PDBsum" id="6OSI"/>
<dbReference type="PDBsum" id="6OTR"/>
<dbReference type="PDBsum" id="6OXA"/>
<dbReference type="PDBsum" id="6OXI"/>
<dbReference type="PDBsum" id="6Q95"/>
<dbReference type="PDBsum" id="6QNQ"/>
<dbReference type="PDBsum" id="6QNR"/>
<dbReference type="PDBsum" id="6UCQ"/>
<dbReference type="PDBsum" id="6UO1"/>
<dbReference type="PDBsum" id="6XHV"/>
<dbReference type="PDBsum" id="6XHW"/>
<dbReference type="PDBsum" id="6XHX"/>
<dbReference type="PDBsum" id="6XHY"/>
<dbReference type="PDBsum" id="6XQD"/>
<dbReference type="PDBsum" id="6XQE"/>
<dbReference type="PDBsum" id="7AZO"/>
<dbReference type="PDBsum" id="7AZS"/>
<dbReference type="PDBsum" id="7JQL"/>
<dbReference type="PDBsum" id="7JQM"/>
<dbReference type="PDBsum" id="7LH5"/>
<dbReference type="PDBsum" id="7MD7"/>
<dbReference type="PDBsum" id="7RQ8"/>
<dbReference type="PDBsum" id="7RQ9"/>
<dbReference type="PDBsum" id="7RQA"/>
<dbReference type="PDBsum" id="7RQB"/>
<dbReference type="PDBsum" id="7RQC"/>
<dbReference type="PDBsum" id="7RQD"/>
<dbReference type="PDBsum" id="7RQE"/>
<dbReference type="PDBsum" id="7U2H"/>
<dbReference type="PDBsum" id="7U2I"/>
<dbReference type="PDBsum" id="7U2J"/>
<dbReference type="PDBsum" id="8CVJ"/>
<dbReference type="PDBsum" id="8CVK"/>
<dbReference type="PDBsum" id="8CVL"/>
<dbReference type="PDBsum" id="8EKB"/>
<dbReference type="PDBsum" id="8EV6"/>
<dbReference type="PDBsum" id="8EV7"/>
<dbReference type="PDBsum" id="8FC1"/>
<dbReference type="PDBsum" id="8FC2"/>
<dbReference type="PDBsum" id="8FC3"/>
<dbReference type="PDBsum" id="8FC4"/>
<dbReference type="PDBsum" id="8FC5"/>
<dbReference type="PDBsum" id="8FC6"/>
<dbReference type="PDBsum" id="8FOM"/>
<dbReference type="PDBsum" id="8FON"/>
<dbReference type="PDBsum" id="8G29"/>
<dbReference type="PDBsum" id="8G2A"/>
<dbReference type="PDBsum" id="8G2B"/>
<dbReference type="PDBsum" id="8G2C"/>
<dbReference type="PDBsum" id="8G2D"/>
<dbReference type="PDBsum" id="8T8B"/>
<dbReference type="PDBsum" id="8T8C"/>
<dbReference type="PDBsum" id="8UD6"/>
<dbReference type="PDBsum" id="8UD7"/>
<dbReference type="PDBsum" id="8UD8"/>
<dbReference type="PDBsum" id="8UVR"/>
<dbReference type="PDBsum" id="8UVS"/>
<dbReference type="PDBsum" id="8VTU"/>
<dbReference type="PDBsum" id="8VTV"/>
<dbReference type="PDBsum" id="8VTW"/>
<dbReference type="PDBsum" id="8VTX"/>
<dbReference type="PDBsum" id="8VTY"/>
<dbReference type="PDBsum" id="8WV1"/>
<dbReference type="PDBsum" id="9B00"/>
<dbReference type="PDBsum" id="9D0J"/>
<dbReference type="PDBsum" id="9D7R"/>
<dbReference type="PDBsum" id="9D7S"/>
<dbReference type="PDBsum" id="9D7T"/>
<dbReference type="PDBsum" id="9DFC"/>
<dbReference type="PDBsum" id="9DFD"/>
<dbReference type="PDBsum" id="9DFE"/>
<dbReference type="EMDB" id="EMD-0101"/>
<dbReference type="EMDB" id="EMD-0104"/>
<dbReference type="EMDB" id="EMD-0105"/>
<dbReference type="EMDB" id="EMD-3852"/>
<dbReference type="EMDB" id="EMD-4475"/>
<dbReference type="EMDB" id="EMD-6934"/>
<dbReference type="EMDB" id="EMD-8596"/>
<dbReference type="EMDB" id="EMD-8597"/>
<dbReference type="SMR" id="P60491"/>
<dbReference type="IntAct" id="P60491">
    <property type="interactions" value="7"/>
</dbReference>
<dbReference type="EnsemblBacteria" id="BAD70376">
    <property type="protein sequence ID" value="BAD70376"/>
    <property type="gene ID" value="BAD70376"/>
</dbReference>
<dbReference type="GeneID" id="3169980"/>
<dbReference type="KEGG" id="ttj:TTHA0553"/>
<dbReference type="PATRIC" id="fig|300852.9.peg.552"/>
<dbReference type="eggNOG" id="COG0292">
    <property type="taxonomic scope" value="Bacteria"/>
</dbReference>
<dbReference type="HOGENOM" id="CLU_123265_0_1_0"/>
<dbReference type="PhylomeDB" id="P60491"/>
<dbReference type="Proteomes" id="UP000000532">
    <property type="component" value="Chromosome"/>
</dbReference>
<dbReference type="GO" id="GO:1990904">
    <property type="term" value="C:ribonucleoprotein complex"/>
    <property type="evidence" value="ECO:0007669"/>
    <property type="project" value="UniProtKB-KW"/>
</dbReference>
<dbReference type="GO" id="GO:0005840">
    <property type="term" value="C:ribosome"/>
    <property type="evidence" value="ECO:0007669"/>
    <property type="project" value="UniProtKB-KW"/>
</dbReference>
<dbReference type="GO" id="GO:0019843">
    <property type="term" value="F:rRNA binding"/>
    <property type="evidence" value="ECO:0007669"/>
    <property type="project" value="UniProtKB-UniRule"/>
</dbReference>
<dbReference type="GO" id="GO:0003735">
    <property type="term" value="F:structural constituent of ribosome"/>
    <property type="evidence" value="ECO:0007669"/>
    <property type="project" value="InterPro"/>
</dbReference>
<dbReference type="GO" id="GO:0000027">
    <property type="term" value="P:ribosomal large subunit assembly"/>
    <property type="evidence" value="ECO:0007669"/>
    <property type="project" value="UniProtKB-UniRule"/>
</dbReference>
<dbReference type="GO" id="GO:0006412">
    <property type="term" value="P:translation"/>
    <property type="evidence" value="ECO:0007669"/>
    <property type="project" value="InterPro"/>
</dbReference>
<dbReference type="CDD" id="cd07026">
    <property type="entry name" value="Ribosomal_L20"/>
    <property type="match status" value="1"/>
</dbReference>
<dbReference type="FunFam" id="1.10.1900.20:FF:000001">
    <property type="entry name" value="50S ribosomal protein L20"/>
    <property type="match status" value="1"/>
</dbReference>
<dbReference type="Gene3D" id="6.10.160.10">
    <property type="match status" value="1"/>
</dbReference>
<dbReference type="Gene3D" id="1.10.1900.20">
    <property type="entry name" value="Ribosomal protein L20"/>
    <property type="match status" value="1"/>
</dbReference>
<dbReference type="HAMAP" id="MF_00382">
    <property type="entry name" value="Ribosomal_bL20"/>
    <property type="match status" value="1"/>
</dbReference>
<dbReference type="InterPro" id="IPR005813">
    <property type="entry name" value="Ribosomal_bL20"/>
</dbReference>
<dbReference type="InterPro" id="IPR049946">
    <property type="entry name" value="RIBOSOMAL_L20_CS"/>
</dbReference>
<dbReference type="InterPro" id="IPR035566">
    <property type="entry name" value="Ribosomal_protein_bL20_C"/>
</dbReference>
<dbReference type="NCBIfam" id="TIGR01032">
    <property type="entry name" value="rplT_bact"/>
    <property type="match status" value="1"/>
</dbReference>
<dbReference type="PANTHER" id="PTHR10986">
    <property type="entry name" value="39S RIBOSOMAL PROTEIN L20"/>
    <property type="match status" value="1"/>
</dbReference>
<dbReference type="Pfam" id="PF00453">
    <property type="entry name" value="Ribosomal_L20"/>
    <property type="match status" value="1"/>
</dbReference>
<dbReference type="PRINTS" id="PR00062">
    <property type="entry name" value="RIBOSOMALL20"/>
</dbReference>
<dbReference type="SUPFAM" id="SSF74731">
    <property type="entry name" value="Ribosomal protein L20"/>
    <property type="match status" value="1"/>
</dbReference>
<dbReference type="PROSITE" id="PS00937">
    <property type="entry name" value="RIBOSOMAL_L20"/>
    <property type="match status" value="1"/>
</dbReference>
<keyword id="KW-0002">3D-structure</keyword>
<keyword id="KW-0903">Direct protein sequencing</keyword>
<keyword id="KW-1185">Reference proteome</keyword>
<keyword id="KW-0687">Ribonucleoprotein</keyword>
<keyword id="KW-0689">Ribosomal protein</keyword>
<keyword id="KW-0694">RNA-binding</keyword>
<keyword id="KW-0699">rRNA-binding</keyword>
<accession>P60491</accession>
<accession>Q5SKU0</accession>
<name>RL20_THET8</name>